<gene>
    <name evidence="1" type="primary">rplJ</name>
    <name type="ordered locus">Smal_0747</name>
</gene>
<organism>
    <name type="scientific">Stenotrophomonas maltophilia (strain R551-3)</name>
    <dbReference type="NCBI Taxonomy" id="391008"/>
    <lineage>
        <taxon>Bacteria</taxon>
        <taxon>Pseudomonadati</taxon>
        <taxon>Pseudomonadota</taxon>
        <taxon>Gammaproteobacteria</taxon>
        <taxon>Lysobacterales</taxon>
        <taxon>Lysobacteraceae</taxon>
        <taxon>Stenotrophomonas</taxon>
        <taxon>Stenotrophomonas maltophilia group</taxon>
    </lineage>
</organism>
<reference key="1">
    <citation type="submission" date="2008-06" db="EMBL/GenBank/DDBJ databases">
        <title>Complete sequence of Stenotrophomonas maltophilia R551-3.</title>
        <authorList>
            <consortium name="US DOE Joint Genome Institute"/>
            <person name="Lucas S."/>
            <person name="Copeland A."/>
            <person name="Lapidus A."/>
            <person name="Glavina del Rio T."/>
            <person name="Dalin E."/>
            <person name="Tice H."/>
            <person name="Pitluck S."/>
            <person name="Chain P."/>
            <person name="Malfatti S."/>
            <person name="Shin M."/>
            <person name="Vergez L."/>
            <person name="Lang D."/>
            <person name="Schmutz J."/>
            <person name="Larimer F."/>
            <person name="Land M."/>
            <person name="Hauser L."/>
            <person name="Kyrpides N."/>
            <person name="Mikhailova N."/>
            <person name="Taghavi S."/>
            <person name="Monchy S."/>
            <person name="Newman L."/>
            <person name="Vangronsveld J."/>
            <person name="van der Lelie D."/>
            <person name="Richardson P."/>
        </authorList>
    </citation>
    <scope>NUCLEOTIDE SEQUENCE [LARGE SCALE GENOMIC DNA]</scope>
    <source>
        <strain>R551-3</strain>
    </source>
</reference>
<accession>B4SKV4</accession>
<evidence type="ECO:0000255" key="1">
    <source>
        <dbReference type="HAMAP-Rule" id="MF_00362"/>
    </source>
</evidence>
<evidence type="ECO:0000305" key="2"/>
<feature type="chain" id="PRO_1000121019" description="Large ribosomal subunit protein uL10">
    <location>
        <begin position="1"/>
        <end position="178"/>
    </location>
</feature>
<name>RL10_STRM5</name>
<proteinExistence type="inferred from homology"/>
<dbReference type="EMBL" id="CP001111">
    <property type="protein sequence ID" value="ACF50452.1"/>
    <property type="molecule type" value="Genomic_DNA"/>
</dbReference>
<dbReference type="RefSeq" id="WP_004145252.1">
    <property type="nucleotide sequence ID" value="NC_011071.1"/>
</dbReference>
<dbReference type="SMR" id="B4SKV4"/>
<dbReference type="STRING" id="391008.Smal_0747"/>
<dbReference type="KEGG" id="smt:Smal_0747"/>
<dbReference type="eggNOG" id="COG0244">
    <property type="taxonomic scope" value="Bacteria"/>
</dbReference>
<dbReference type="HOGENOM" id="CLU_092227_0_1_6"/>
<dbReference type="OrthoDB" id="9808307at2"/>
<dbReference type="Proteomes" id="UP000001867">
    <property type="component" value="Chromosome"/>
</dbReference>
<dbReference type="GO" id="GO:1990904">
    <property type="term" value="C:ribonucleoprotein complex"/>
    <property type="evidence" value="ECO:0007669"/>
    <property type="project" value="UniProtKB-KW"/>
</dbReference>
<dbReference type="GO" id="GO:0005840">
    <property type="term" value="C:ribosome"/>
    <property type="evidence" value="ECO:0007669"/>
    <property type="project" value="UniProtKB-KW"/>
</dbReference>
<dbReference type="GO" id="GO:0070180">
    <property type="term" value="F:large ribosomal subunit rRNA binding"/>
    <property type="evidence" value="ECO:0007669"/>
    <property type="project" value="UniProtKB-UniRule"/>
</dbReference>
<dbReference type="GO" id="GO:0006412">
    <property type="term" value="P:translation"/>
    <property type="evidence" value="ECO:0007669"/>
    <property type="project" value="UniProtKB-UniRule"/>
</dbReference>
<dbReference type="CDD" id="cd05797">
    <property type="entry name" value="Ribosomal_L10"/>
    <property type="match status" value="1"/>
</dbReference>
<dbReference type="FunFam" id="3.30.70.1730:FF:000001">
    <property type="entry name" value="50S ribosomal protein L10"/>
    <property type="match status" value="1"/>
</dbReference>
<dbReference type="Gene3D" id="3.30.70.1730">
    <property type="match status" value="1"/>
</dbReference>
<dbReference type="Gene3D" id="6.10.250.2350">
    <property type="match status" value="1"/>
</dbReference>
<dbReference type="HAMAP" id="MF_00362">
    <property type="entry name" value="Ribosomal_uL10"/>
    <property type="match status" value="1"/>
</dbReference>
<dbReference type="InterPro" id="IPR001790">
    <property type="entry name" value="Ribosomal_uL10"/>
</dbReference>
<dbReference type="InterPro" id="IPR043141">
    <property type="entry name" value="Ribosomal_uL10-like_sf"/>
</dbReference>
<dbReference type="InterPro" id="IPR022973">
    <property type="entry name" value="Ribosomal_uL10_bac"/>
</dbReference>
<dbReference type="InterPro" id="IPR047865">
    <property type="entry name" value="Ribosomal_uL10_bac_type"/>
</dbReference>
<dbReference type="NCBIfam" id="NF000955">
    <property type="entry name" value="PRK00099.1-1"/>
    <property type="match status" value="1"/>
</dbReference>
<dbReference type="PANTHER" id="PTHR11560">
    <property type="entry name" value="39S RIBOSOMAL PROTEIN L10, MITOCHONDRIAL"/>
    <property type="match status" value="1"/>
</dbReference>
<dbReference type="Pfam" id="PF00466">
    <property type="entry name" value="Ribosomal_L10"/>
    <property type="match status" value="1"/>
</dbReference>
<dbReference type="SUPFAM" id="SSF160369">
    <property type="entry name" value="Ribosomal protein L10-like"/>
    <property type="match status" value="1"/>
</dbReference>
<sequence length="178" mass="18530">MALNLSQKQEVVAELADIAAKAHSLIAAEYAGTTVAQMTAMRKQARETGVFLKVVKNTLASRAVEGTEFAVAQDQMVGPLLYAFSLEEPGAAGRLIKEAAKGNDKLKAKVVAIGGEVFPASHVDVLASLPTRDQALAMLARVLTEPVTMFARAIKAIGDKQNGGDVAADAAEPAAETA</sequence>
<protein>
    <recommendedName>
        <fullName evidence="1">Large ribosomal subunit protein uL10</fullName>
    </recommendedName>
    <alternativeName>
        <fullName evidence="2">50S ribosomal protein L10</fullName>
    </alternativeName>
</protein>
<comment type="function">
    <text evidence="1">Forms part of the ribosomal stalk, playing a central role in the interaction of the ribosome with GTP-bound translation factors.</text>
</comment>
<comment type="subunit">
    <text evidence="1">Part of the ribosomal stalk of the 50S ribosomal subunit. The N-terminus interacts with L11 and the large rRNA to form the base of the stalk. The C-terminus forms an elongated spine to which L12 dimers bind in a sequential fashion forming a multimeric L10(L12)X complex.</text>
</comment>
<comment type="similarity">
    <text evidence="1">Belongs to the universal ribosomal protein uL10 family.</text>
</comment>
<keyword id="KW-0687">Ribonucleoprotein</keyword>
<keyword id="KW-0689">Ribosomal protein</keyword>
<keyword id="KW-0694">RNA-binding</keyword>
<keyword id="KW-0699">rRNA-binding</keyword>